<organism>
    <name type="scientific">Methylocella silvestris (strain DSM 15510 / CIP 108128 / LMG 27833 / NCIMB 13906 / BL2)</name>
    <dbReference type="NCBI Taxonomy" id="395965"/>
    <lineage>
        <taxon>Bacteria</taxon>
        <taxon>Pseudomonadati</taxon>
        <taxon>Pseudomonadota</taxon>
        <taxon>Alphaproteobacteria</taxon>
        <taxon>Hyphomicrobiales</taxon>
        <taxon>Beijerinckiaceae</taxon>
        <taxon>Methylocella</taxon>
    </lineage>
</organism>
<reference key="1">
    <citation type="journal article" date="2010" name="J. Bacteriol.">
        <title>Complete genome sequence of the aerobic facultative methanotroph Methylocella silvestris BL2.</title>
        <authorList>
            <person name="Chen Y."/>
            <person name="Crombie A."/>
            <person name="Rahman M.T."/>
            <person name="Dedysh S.N."/>
            <person name="Liesack W."/>
            <person name="Stott M.B."/>
            <person name="Alam M."/>
            <person name="Theisen A.R."/>
            <person name="Murrell J.C."/>
            <person name="Dunfield P.F."/>
        </authorList>
    </citation>
    <scope>NUCLEOTIDE SEQUENCE [LARGE SCALE GENOMIC DNA]</scope>
    <source>
        <strain>DSM 15510 / CIP 108128 / LMG 27833 / NCIMB 13906 / BL2</strain>
    </source>
</reference>
<gene>
    <name evidence="1" type="primary">rpmE</name>
    <name type="ordered locus">Msil_1008</name>
</gene>
<evidence type="ECO:0000255" key="1">
    <source>
        <dbReference type="HAMAP-Rule" id="MF_00501"/>
    </source>
</evidence>
<evidence type="ECO:0000305" key="2"/>
<comment type="function">
    <text evidence="1">Binds the 23S rRNA.</text>
</comment>
<comment type="subunit">
    <text evidence="1">Part of the 50S ribosomal subunit.</text>
</comment>
<comment type="similarity">
    <text evidence="1">Belongs to the bacterial ribosomal protein bL31 family. Type A subfamily.</text>
</comment>
<name>RL31_METSB</name>
<dbReference type="EMBL" id="CP001280">
    <property type="protein sequence ID" value="ACK49977.1"/>
    <property type="molecule type" value="Genomic_DNA"/>
</dbReference>
<dbReference type="RefSeq" id="WP_012590047.1">
    <property type="nucleotide sequence ID" value="NC_011666.1"/>
</dbReference>
<dbReference type="SMR" id="B8EK30"/>
<dbReference type="STRING" id="395965.Msil_1008"/>
<dbReference type="KEGG" id="msl:Msil_1008"/>
<dbReference type="eggNOG" id="COG0254">
    <property type="taxonomic scope" value="Bacteria"/>
</dbReference>
<dbReference type="HOGENOM" id="CLU_114306_3_2_5"/>
<dbReference type="OrthoDB" id="9803251at2"/>
<dbReference type="Proteomes" id="UP000002257">
    <property type="component" value="Chromosome"/>
</dbReference>
<dbReference type="GO" id="GO:1990904">
    <property type="term" value="C:ribonucleoprotein complex"/>
    <property type="evidence" value="ECO:0007669"/>
    <property type="project" value="UniProtKB-KW"/>
</dbReference>
<dbReference type="GO" id="GO:0005840">
    <property type="term" value="C:ribosome"/>
    <property type="evidence" value="ECO:0007669"/>
    <property type="project" value="UniProtKB-KW"/>
</dbReference>
<dbReference type="GO" id="GO:0019843">
    <property type="term" value="F:rRNA binding"/>
    <property type="evidence" value="ECO:0007669"/>
    <property type="project" value="UniProtKB-KW"/>
</dbReference>
<dbReference type="GO" id="GO:0003735">
    <property type="term" value="F:structural constituent of ribosome"/>
    <property type="evidence" value="ECO:0007669"/>
    <property type="project" value="InterPro"/>
</dbReference>
<dbReference type="GO" id="GO:0006412">
    <property type="term" value="P:translation"/>
    <property type="evidence" value="ECO:0007669"/>
    <property type="project" value="UniProtKB-UniRule"/>
</dbReference>
<dbReference type="Gene3D" id="4.10.830.30">
    <property type="entry name" value="Ribosomal protein L31"/>
    <property type="match status" value="1"/>
</dbReference>
<dbReference type="HAMAP" id="MF_00501">
    <property type="entry name" value="Ribosomal_bL31_1"/>
    <property type="match status" value="1"/>
</dbReference>
<dbReference type="InterPro" id="IPR034704">
    <property type="entry name" value="Ribosomal_bL28/bL31-like_sf"/>
</dbReference>
<dbReference type="InterPro" id="IPR002150">
    <property type="entry name" value="Ribosomal_bL31"/>
</dbReference>
<dbReference type="InterPro" id="IPR027491">
    <property type="entry name" value="Ribosomal_bL31_A"/>
</dbReference>
<dbReference type="InterPro" id="IPR042105">
    <property type="entry name" value="Ribosomal_bL31_sf"/>
</dbReference>
<dbReference type="NCBIfam" id="TIGR00105">
    <property type="entry name" value="L31"/>
    <property type="match status" value="1"/>
</dbReference>
<dbReference type="NCBIfam" id="NF001809">
    <property type="entry name" value="PRK00528.1"/>
    <property type="match status" value="1"/>
</dbReference>
<dbReference type="PANTHER" id="PTHR33280">
    <property type="entry name" value="50S RIBOSOMAL PROTEIN L31, CHLOROPLASTIC"/>
    <property type="match status" value="1"/>
</dbReference>
<dbReference type="PANTHER" id="PTHR33280:SF6">
    <property type="entry name" value="LARGE RIBOSOMAL SUBUNIT PROTEIN BL31A"/>
    <property type="match status" value="1"/>
</dbReference>
<dbReference type="Pfam" id="PF01197">
    <property type="entry name" value="Ribosomal_L31"/>
    <property type="match status" value="1"/>
</dbReference>
<dbReference type="PRINTS" id="PR01249">
    <property type="entry name" value="RIBOSOMALL31"/>
</dbReference>
<dbReference type="SUPFAM" id="SSF143800">
    <property type="entry name" value="L28p-like"/>
    <property type="match status" value="1"/>
</dbReference>
<dbReference type="PROSITE" id="PS01143">
    <property type="entry name" value="RIBOSOMAL_L31"/>
    <property type="match status" value="1"/>
</dbReference>
<feature type="chain" id="PRO_1000176967" description="Large ribosomal subunit protein bL31">
    <location>
        <begin position="1"/>
        <end position="76"/>
    </location>
</feature>
<accession>B8EK30</accession>
<protein>
    <recommendedName>
        <fullName evidence="1">Large ribosomal subunit protein bL31</fullName>
    </recommendedName>
    <alternativeName>
        <fullName evidence="2">50S ribosomal protein L31</fullName>
    </alternativeName>
</protein>
<proteinExistence type="inferred from homology"/>
<sequence>MKADIHPQYHLVKVVMTDGTEFLTRSTYGSEGATLNLDIDPKTHPAWTGGSAQLLDRGGRLSRFNSRFSGLSFGKK</sequence>
<keyword id="KW-1185">Reference proteome</keyword>
<keyword id="KW-0687">Ribonucleoprotein</keyword>
<keyword id="KW-0689">Ribosomal protein</keyword>
<keyword id="KW-0694">RNA-binding</keyword>
<keyword id="KW-0699">rRNA-binding</keyword>